<protein>
    <recommendedName>
        <fullName evidence="1">Ribosome-binding factor A</fullName>
    </recommendedName>
</protein>
<reference key="1">
    <citation type="journal article" date="2006" name="J. Bacteriol.">
        <title>Complete genome sequence of Yersinia pestis strains Antiqua and Nepal516: evidence of gene reduction in an emerging pathogen.</title>
        <authorList>
            <person name="Chain P.S.G."/>
            <person name="Hu P."/>
            <person name="Malfatti S.A."/>
            <person name="Radnedge L."/>
            <person name="Larimer F."/>
            <person name="Vergez L.M."/>
            <person name="Worsham P."/>
            <person name="Chu M.C."/>
            <person name="Andersen G.L."/>
        </authorList>
    </citation>
    <scope>NUCLEOTIDE SEQUENCE [LARGE SCALE GENOMIC DNA]</scope>
    <source>
        <strain>Antiqua</strain>
    </source>
</reference>
<dbReference type="EMBL" id="CP000308">
    <property type="protein sequence ID" value="ABG12014.1"/>
    <property type="molecule type" value="Genomic_DNA"/>
</dbReference>
<dbReference type="RefSeq" id="WP_002209255.1">
    <property type="nucleotide sequence ID" value="NZ_CP009906.1"/>
</dbReference>
<dbReference type="SMR" id="Q1CC08"/>
<dbReference type="GeneID" id="96663988"/>
<dbReference type="KEGG" id="ypa:YPA_0045"/>
<dbReference type="Proteomes" id="UP000001971">
    <property type="component" value="Chromosome"/>
</dbReference>
<dbReference type="GO" id="GO:0005829">
    <property type="term" value="C:cytosol"/>
    <property type="evidence" value="ECO:0007669"/>
    <property type="project" value="TreeGrafter"/>
</dbReference>
<dbReference type="GO" id="GO:0043024">
    <property type="term" value="F:ribosomal small subunit binding"/>
    <property type="evidence" value="ECO:0007669"/>
    <property type="project" value="TreeGrafter"/>
</dbReference>
<dbReference type="GO" id="GO:0030490">
    <property type="term" value="P:maturation of SSU-rRNA"/>
    <property type="evidence" value="ECO:0007669"/>
    <property type="project" value="UniProtKB-UniRule"/>
</dbReference>
<dbReference type="FunFam" id="3.30.300.20:FF:000007">
    <property type="entry name" value="Ribosome-binding factor A"/>
    <property type="match status" value="1"/>
</dbReference>
<dbReference type="Gene3D" id="3.30.300.20">
    <property type="match status" value="1"/>
</dbReference>
<dbReference type="HAMAP" id="MF_00003">
    <property type="entry name" value="RbfA"/>
    <property type="match status" value="1"/>
</dbReference>
<dbReference type="InterPro" id="IPR015946">
    <property type="entry name" value="KH_dom-like_a/b"/>
</dbReference>
<dbReference type="InterPro" id="IPR000238">
    <property type="entry name" value="RbfA"/>
</dbReference>
<dbReference type="InterPro" id="IPR023799">
    <property type="entry name" value="RbfA_dom_sf"/>
</dbReference>
<dbReference type="InterPro" id="IPR020053">
    <property type="entry name" value="Ribosome-bd_factorA_CS"/>
</dbReference>
<dbReference type="NCBIfam" id="TIGR00082">
    <property type="entry name" value="rbfA"/>
    <property type="match status" value="1"/>
</dbReference>
<dbReference type="PANTHER" id="PTHR33515">
    <property type="entry name" value="RIBOSOME-BINDING FACTOR A, CHLOROPLASTIC-RELATED"/>
    <property type="match status" value="1"/>
</dbReference>
<dbReference type="PANTHER" id="PTHR33515:SF1">
    <property type="entry name" value="RIBOSOME-BINDING FACTOR A, CHLOROPLASTIC-RELATED"/>
    <property type="match status" value="1"/>
</dbReference>
<dbReference type="Pfam" id="PF02033">
    <property type="entry name" value="RBFA"/>
    <property type="match status" value="1"/>
</dbReference>
<dbReference type="SUPFAM" id="SSF89919">
    <property type="entry name" value="Ribosome-binding factor A, RbfA"/>
    <property type="match status" value="1"/>
</dbReference>
<dbReference type="PROSITE" id="PS01319">
    <property type="entry name" value="RBFA"/>
    <property type="match status" value="1"/>
</dbReference>
<sequence length="136" mass="15263">MAKEFSRSQRVSQEMQKEIALILQREIKDPRVGMATVSGIELSRDLAYAKVFVTFLNVLTDNADPDTVKNGIKALQDASGYIRTLLGKAMRLRIVPELTFAYDNSLIEGMRMSNLVSNVIKNDVERQVNPGSDEEK</sequence>
<comment type="function">
    <text evidence="1">One of several proteins that assist in the late maturation steps of the functional core of the 30S ribosomal subunit. Associates with free 30S ribosomal subunits (but not with 30S subunits that are part of 70S ribosomes or polysomes). Required for efficient processing of 16S rRNA. May interact with the 5'-terminal helix region of 16S rRNA.</text>
</comment>
<comment type="subunit">
    <text evidence="1">Monomer. Binds 30S ribosomal subunits, but not 50S ribosomal subunits or 70S ribosomes.</text>
</comment>
<comment type="subcellular location">
    <subcellularLocation>
        <location evidence="1">Cytoplasm</location>
    </subcellularLocation>
</comment>
<comment type="similarity">
    <text evidence="1">Belongs to the RbfA family.</text>
</comment>
<evidence type="ECO:0000255" key="1">
    <source>
        <dbReference type="HAMAP-Rule" id="MF_00003"/>
    </source>
</evidence>
<accession>Q1CC08</accession>
<proteinExistence type="inferred from homology"/>
<keyword id="KW-0963">Cytoplasm</keyword>
<keyword id="KW-0690">Ribosome biogenesis</keyword>
<name>RBFA_YERPA</name>
<organism>
    <name type="scientific">Yersinia pestis bv. Antiqua (strain Antiqua)</name>
    <dbReference type="NCBI Taxonomy" id="360102"/>
    <lineage>
        <taxon>Bacteria</taxon>
        <taxon>Pseudomonadati</taxon>
        <taxon>Pseudomonadota</taxon>
        <taxon>Gammaproteobacteria</taxon>
        <taxon>Enterobacterales</taxon>
        <taxon>Yersiniaceae</taxon>
        <taxon>Yersinia</taxon>
    </lineage>
</organism>
<gene>
    <name evidence="1" type="primary">rbfA</name>
    <name type="ordered locus">YPA_0045</name>
</gene>
<feature type="chain" id="PRO_1000000248" description="Ribosome-binding factor A">
    <location>
        <begin position="1"/>
        <end position="136"/>
    </location>
</feature>